<keyword id="KW-0963">Cytoplasm</keyword>
<keyword id="KW-1185">Reference proteome</keyword>
<dbReference type="EMBL" id="BC077385">
    <property type="protein sequence ID" value="AAH77385.1"/>
    <property type="molecule type" value="mRNA"/>
</dbReference>
<dbReference type="RefSeq" id="NP_001086743.1">
    <property type="nucleotide sequence ID" value="NM_001093274.1"/>
</dbReference>
<dbReference type="SMR" id="Q6DDW7"/>
<dbReference type="DNASU" id="446578"/>
<dbReference type="GeneID" id="446578"/>
<dbReference type="KEGG" id="xla:446578"/>
<dbReference type="AGR" id="Xenbase:XB-GENE-949512"/>
<dbReference type="CTD" id="446578"/>
<dbReference type="Xenbase" id="XB-GENE-949512">
    <property type="gene designation" value="castor2.L"/>
</dbReference>
<dbReference type="OrthoDB" id="58529at2759"/>
<dbReference type="Proteomes" id="UP000186698">
    <property type="component" value="Chromosome 2L"/>
</dbReference>
<dbReference type="Bgee" id="446578">
    <property type="expression patterns" value="Expressed in heart and 19 other cell types or tissues"/>
</dbReference>
<dbReference type="GO" id="GO:0005829">
    <property type="term" value="C:cytosol"/>
    <property type="evidence" value="ECO:0000250"/>
    <property type="project" value="UniProtKB"/>
</dbReference>
<dbReference type="GO" id="GO:1903577">
    <property type="term" value="P:cellular response to L-arginine"/>
    <property type="evidence" value="ECO:0000318"/>
    <property type="project" value="GO_Central"/>
</dbReference>
<dbReference type="GO" id="GO:1904262">
    <property type="term" value="P:negative regulation of TORC1 signaling"/>
    <property type="evidence" value="ECO:0000250"/>
    <property type="project" value="UniProtKB"/>
</dbReference>
<dbReference type="FunFam" id="3.30.2130.10:FF:000003">
    <property type="entry name" value="Cytosolic arginine sensor for mTORC1 subunit 1"/>
    <property type="match status" value="1"/>
</dbReference>
<dbReference type="FunFam" id="3.30.2130.10:FF:000004">
    <property type="entry name" value="Cytosolic arginine sensor for mTORC1 subunit 1"/>
    <property type="match status" value="1"/>
</dbReference>
<dbReference type="Gene3D" id="3.30.2130.10">
    <property type="entry name" value="VC0802-like"/>
    <property type="match status" value="2"/>
</dbReference>
<dbReference type="InterPro" id="IPR045865">
    <property type="entry name" value="ACT-like_dom_sf"/>
</dbReference>
<dbReference type="InterPro" id="IPR049479">
    <property type="entry name" value="CASTOR1_ACT-like"/>
</dbReference>
<dbReference type="InterPro" id="IPR040778">
    <property type="entry name" value="CASTOR1_N"/>
</dbReference>
<dbReference type="InterPro" id="IPR027795">
    <property type="entry name" value="CASTOR_ACT_dom"/>
</dbReference>
<dbReference type="InterPro" id="IPR026249">
    <property type="entry name" value="CASTOR_fam"/>
</dbReference>
<dbReference type="InterPro" id="IPR051719">
    <property type="entry name" value="CASTOR_mTORC1"/>
</dbReference>
<dbReference type="PANTHER" id="PTHR31131">
    <property type="entry name" value="CHROMOSOME 1, WHOLE GENOME SHOTGUN SEQUENCE"/>
    <property type="match status" value="1"/>
</dbReference>
<dbReference type="PANTHER" id="PTHR31131:SF2">
    <property type="entry name" value="CYTOSOLIC ARGININE SENSOR FOR MTORC1 SUBUNIT 2"/>
    <property type="match status" value="1"/>
</dbReference>
<dbReference type="Pfam" id="PF13840">
    <property type="entry name" value="ACT_7"/>
    <property type="match status" value="2"/>
</dbReference>
<dbReference type="Pfam" id="PF21389">
    <property type="entry name" value="CASTOR1_ACT-like"/>
    <property type="match status" value="1"/>
</dbReference>
<dbReference type="Pfam" id="PF18700">
    <property type="entry name" value="Castor1_N"/>
    <property type="match status" value="1"/>
</dbReference>
<dbReference type="PRINTS" id="PR02078">
    <property type="entry name" value="GATSLIKEFMLY"/>
</dbReference>
<dbReference type="SUPFAM" id="SSF55021">
    <property type="entry name" value="ACT-like"/>
    <property type="match status" value="2"/>
</dbReference>
<accession>Q6DDW7</accession>
<evidence type="ECO:0000250" key="1">
    <source>
        <dbReference type="UniProtKB" id="A6NHX0"/>
    </source>
</evidence>
<evidence type="ECO:0000305" key="2"/>
<protein>
    <recommendedName>
        <fullName evidence="1">Cytosolic arginine sensor for mTORC1 subunit 2</fullName>
    </recommendedName>
    <alternativeName>
        <fullName evidence="2">GATS-like protein 2</fullName>
    </alternativeName>
</protein>
<gene>
    <name evidence="1" type="primary">castor2</name>
    <name type="synonym">gatsl1</name>
    <name evidence="1" type="synonym">gatsl2</name>
</gene>
<sequence>MELHILEHRLKVASIAKENIQLFTYGLIKLAFLSSKTRCKFFSLTETPEDYTIIVDEEGFLELPSSEHLSVADATWLALNVVSGGGSSSSSQPIGVTKIAKSVIAPLADQNISVFMLSTYQTDFILVRERDLPFVMHTLAAEFTILQVVNGETVAADNLGVTNGFVKPKLVQRPVIHPLSSPSNMFCVTSLDPYTLPTVTTLLMDVMFYSNGVKDSVVGSEEPDHIRFFSFSLIEGYISLVMDVQTQQRFPSNLLFTSASGELWKMVRIGGQPLGFDECGIVAQISEPLAAADIPAYYISTFKFDHALVPEENINGVINALQVSQAEKH</sequence>
<name>CAST2_XENLA</name>
<proteinExistence type="evidence at transcript level"/>
<reference key="1">
    <citation type="submission" date="2004-07" db="EMBL/GenBank/DDBJ databases">
        <authorList>
            <consortium name="NIH - Xenopus Gene Collection (XGC) project"/>
        </authorList>
    </citation>
    <scope>NUCLEOTIDE SEQUENCE [LARGE SCALE MRNA]</scope>
    <source>
        <tissue>Embryo</tissue>
    </source>
</reference>
<organism>
    <name type="scientific">Xenopus laevis</name>
    <name type="common">African clawed frog</name>
    <dbReference type="NCBI Taxonomy" id="8355"/>
    <lineage>
        <taxon>Eukaryota</taxon>
        <taxon>Metazoa</taxon>
        <taxon>Chordata</taxon>
        <taxon>Craniata</taxon>
        <taxon>Vertebrata</taxon>
        <taxon>Euteleostomi</taxon>
        <taxon>Amphibia</taxon>
        <taxon>Batrachia</taxon>
        <taxon>Anura</taxon>
        <taxon>Pipoidea</taxon>
        <taxon>Pipidae</taxon>
        <taxon>Xenopodinae</taxon>
        <taxon>Xenopus</taxon>
        <taxon>Xenopus</taxon>
    </lineage>
</organism>
<feature type="chain" id="PRO_0000325894" description="Cytosolic arginine sensor for mTORC1 subunit 2">
    <location>
        <begin position="1"/>
        <end position="329"/>
    </location>
</feature>
<feature type="domain" description="ACT 1">
    <location>
        <begin position="72"/>
        <end position="139"/>
    </location>
</feature>
<feature type="domain" description="ACT 2">
    <location>
        <begin position="262"/>
        <end position="322"/>
    </location>
</feature>
<comment type="function">
    <text evidence="1">Functions as a negative regulator of the TORC1 signaling pathway.</text>
</comment>
<comment type="subunit">
    <text evidence="1">May form homodimers and heterodimers.</text>
</comment>
<comment type="subcellular location">
    <subcellularLocation>
        <location evidence="1">Cytoplasm</location>
        <location evidence="1">Cytosol</location>
    </subcellularLocation>
</comment>
<comment type="similarity">
    <text evidence="2">Belongs to the GATS family.</text>
</comment>